<sequence>MGLNIPPKPESSLWTDDQWKAIQAEGNNVLVAAAAGSGKTAVLVTRIIEKLINESANLNVDELLIVTFTNASAAEMKFRIGKGLEEALAQNPDSTHLKRQVALLNYASISTLHSFCLEIIRKYYFDADIDPNFRLIEPIESSMIRDEVLENLLEQEYSIENNEPFFHLVESFTGDRSDAELHALISKLYDFSRANPDPNIWLEEMVDFYNTEETTSITELPYFPIIKEDIELRVNQAKNYLLNAIDYANENNGPVPYLATLENDLAQIEAITELSWNSWGQLKKAIESIDFKRIPTLKNKSDYDEEYVEEAKKFRDAAKKEIKNIATDWFSREEINYLSDLEKMKPDIKTLSRLVKKFAENFFEEKQQRGVLDFNDLEHLALKILLKDNEASEVAKNYQKQFKEVLIDEYQDTNMVQETILRLVTNSGEEQGNLFMVGDVKQSIYRFRLAEPTLFMTKYQTYQQDGNGSGIRIDLSQNFRSRKEVLDATNFIFHQLMDKHIAEIDYDAAAELTLGASFPETTDMATELLLIDMKSVESETEDELSPQELQKNQVESRAIAMKIKEMIDNKFPIFDKKMKQNRPIQYRDIVILARAMTSAPDMEEAMKVQDIPFYANNNSGYFETTEVATMIALMKVIDNPYQDIPLAAVLRSPIIGLNEEELGQVRMAKKNGYFYDALLTYKDTTVSETADKMSDFIQQLNNWRELSIRENLTSLIWQIYQETNFYEFVGGLPGGKQRQANLRALYDRANQYEKTSFRGLFRFVRFVERLEVRGDDLGTAKTLGEKEDVVRMMTIHASKGLEFPVVIVSGLSRKFNMRDIYSKTLLDKDYGFASNYRDIEKMIVYPTIMQQAMKQKKSREMIAEEMRVLYVALTRAEEKLILTATVPDFEKTSKNWLQVAKEKETILPASTRAKAKCYLDWIGNATIRHPNFKELLCEEMIQTLPTDMKLQIEIKTKEMFLTNELEKTETVNWLENIKEHQPIPVKSPYKDEIQRYMNYEYQNEEATEIRAKQSVTELKRQFSLQDSWSDTTLLKEFQKVSLDRPKFLQQNKLSATEIGTAMHTLMQAVSLEHQPTKEDLEQLLQTMREKDILTEAQLKAINIKQVLGFFESQLGKTMLQKKDLVKREVPFSYLLPVSELYEKVDIDERVLIQGVVDSMIEEEETITLIDYKTDKIEGRYSNWEAAEKIMKERYHIQIKLYAKAIQAISGKKVDAAYLYFFDGQHICQINTKEGF</sequence>
<accession>Q71X99</accession>
<reference key="1">
    <citation type="journal article" date="2004" name="Nucleic Acids Res.">
        <title>Whole genome comparisons of serotype 4b and 1/2a strains of the food-borne pathogen Listeria monocytogenes reveal new insights into the core genome components of this species.</title>
        <authorList>
            <person name="Nelson K.E."/>
            <person name="Fouts D.E."/>
            <person name="Mongodin E.F."/>
            <person name="Ravel J."/>
            <person name="DeBoy R.T."/>
            <person name="Kolonay J.F."/>
            <person name="Rasko D.A."/>
            <person name="Angiuoli S.V."/>
            <person name="Gill S.R."/>
            <person name="Paulsen I.T."/>
            <person name="Peterson J.D."/>
            <person name="White O."/>
            <person name="Nelson W.C."/>
            <person name="Nierman W.C."/>
            <person name="Beanan M.J."/>
            <person name="Brinkac L.M."/>
            <person name="Daugherty S.C."/>
            <person name="Dodson R.J."/>
            <person name="Durkin A.S."/>
            <person name="Madupu R."/>
            <person name="Haft D.H."/>
            <person name="Selengut J."/>
            <person name="Van Aken S.E."/>
            <person name="Khouri H.M."/>
            <person name="Fedorova N."/>
            <person name="Forberger H.A."/>
            <person name="Tran B."/>
            <person name="Kathariou S."/>
            <person name="Wonderling L.D."/>
            <person name="Uhlich G.A."/>
            <person name="Bayles D.O."/>
            <person name="Luchansky J.B."/>
            <person name="Fraser C.M."/>
        </authorList>
    </citation>
    <scope>NUCLEOTIDE SEQUENCE [LARGE SCALE GENOMIC DNA]</scope>
    <source>
        <strain>F2365</strain>
    </source>
</reference>
<dbReference type="EC" id="3.1.-.-" evidence="1"/>
<dbReference type="EC" id="5.6.2.4" evidence="1"/>
<dbReference type="EMBL" id="AE017262">
    <property type="protein sequence ID" value="AAT05066.1"/>
    <property type="molecule type" value="Genomic_DNA"/>
</dbReference>
<dbReference type="RefSeq" id="WP_010959028.1">
    <property type="nucleotide sequence ID" value="NC_002973.6"/>
</dbReference>
<dbReference type="SMR" id="Q71X99"/>
<dbReference type="KEGG" id="lmf:LMOf2365_2300"/>
<dbReference type="HOGENOM" id="CLU_001114_3_1_9"/>
<dbReference type="GO" id="GO:0005829">
    <property type="term" value="C:cytosol"/>
    <property type="evidence" value="ECO:0007669"/>
    <property type="project" value="TreeGrafter"/>
</dbReference>
<dbReference type="GO" id="GO:0033202">
    <property type="term" value="C:DNA helicase complex"/>
    <property type="evidence" value="ECO:0007669"/>
    <property type="project" value="TreeGrafter"/>
</dbReference>
<dbReference type="GO" id="GO:0043138">
    <property type="term" value="F:3'-5' DNA helicase activity"/>
    <property type="evidence" value="ECO:0007669"/>
    <property type="project" value="UniProtKB-UniRule"/>
</dbReference>
<dbReference type="GO" id="GO:0008408">
    <property type="term" value="F:3'-5' exonuclease activity"/>
    <property type="evidence" value="ECO:0007669"/>
    <property type="project" value="UniProtKB-UniRule"/>
</dbReference>
<dbReference type="GO" id="GO:0005524">
    <property type="term" value="F:ATP binding"/>
    <property type="evidence" value="ECO:0007669"/>
    <property type="project" value="UniProtKB-UniRule"/>
</dbReference>
<dbReference type="GO" id="GO:0016887">
    <property type="term" value="F:ATP hydrolysis activity"/>
    <property type="evidence" value="ECO:0007669"/>
    <property type="project" value="RHEA"/>
</dbReference>
<dbReference type="GO" id="GO:0003690">
    <property type="term" value="F:double-stranded DNA binding"/>
    <property type="evidence" value="ECO:0007669"/>
    <property type="project" value="UniProtKB-UniRule"/>
</dbReference>
<dbReference type="GO" id="GO:0000724">
    <property type="term" value="P:double-strand break repair via homologous recombination"/>
    <property type="evidence" value="ECO:0007669"/>
    <property type="project" value="UniProtKB-UniRule"/>
</dbReference>
<dbReference type="CDD" id="cd17932">
    <property type="entry name" value="DEXQc_UvrD"/>
    <property type="match status" value="1"/>
</dbReference>
<dbReference type="FunFam" id="3.40.50.300:FF:001164">
    <property type="entry name" value="ATP-dependent helicase/nuclease subunit A"/>
    <property type="match status" value="1"/>
</dbReference>
<dbReference type="FunFam" id="3.40.50.300:FF:001187">
    <property type="entry name" value="ATP-dependent helicase/nuclease subunit A"/>
    <property type="match status" value="1"/>
</dbReference>
<dbReference type="FunFam" id="3.40.50.300:FF:001196">
    <property type="entry name" value="ATP-dependent helicase/nuclease subunit A"/>
    <property type="match status" value="1"/>
</dbReference>
<dbReference type="FunFam" id="3.40.50.300:FF:001236">
    <property type="entry name" value="ATP-dependent helicase/nuclease subunit A"/>
    <property type="match status" value="1"/>
</dbReference>
<dbReference type="Gene3D" id="3.90.320.10">
    <property type="match status" value="1"/>
</dbReference>
<dbReference type="Gene3D" id="3.40.50.300">
    <property type="entry name" value="P-loop containing nucleotide triphosphate hydrolases"/>
    <property type="match status" value="4"/>
</dbReference>
<dbReference type="HAMAP" id="MF_01451">
    <property type="entry name" value="AddA"/>
    <property type="match status" value="1"/>
</dbReference>
<dbReference type="InterPro" id="IPR014152">
    <property type="entry name" value="AddA"/>
</dbReference>
<dbReference type="InterPro" id="IPR014017">
    <property type="entry name" value="DNA_helicase_UvrD-like_C"/>
</dbReference>
<dbReference type="InterPro" id="IPR000212">
    <property type="entry name" value="DNA_helicase_UvrD/REP"/>
</dbReference>
<dbReference type="InterPro" id="IPR027417">
    <property type="entry name" value="P-loop_NTPase"/>
</dbReference>
<dbReference type="InterPro" id="IPR011604">
    <property type="entry name" value="PDDEXK-like_dom_sf"/>
</dbReference>
<dbReference type="InterPro" id="IPR038726">
    <property type="entry name" value="PDDEXK_AddAB-type"/>
</dbReference>
<dbReference type="InterPro" id="IPR011335">
    <property type="entry name" value="Restrct_endonuc-II-like"/>
</dbReference>
<dbReference type="InterPro" id="IPR014016">
    <property type="entry name" value="UvrD-like_ATP-bd"/>
</dbReference>
<dbReference type="NCBIfam" id="TIGR02785">
    <property type="entry name" value="addA_Gpos"/>
    <property type="match status" value="1"/>
</dbReference>
<dbReference type="PANTHER" id="PTHR11070:SF48">
    <property type="entry name" value="ATP-DEPENDENT HELICASE_NUCLEASE SUBUNIT A"/>
    <property type="match status" value="1"/>
</dbReference>
<dbReference type="PANTHER" id="PTHR11070">
    <property type="entry name" value="UVRD / RECB / PCRA DNA HELICASE FAMILY MEMBER"/>
    <property type="match status" value="1"/>
</dbReference>
<dbReference type="Pfam" id="PF12705">
    <property type="entry name" value="PDDEXK_1"/>
    <property type="match status" value="1"/>
</dbReference>
<dbReference type="Pfam" id="PF00580">
    <property type="entry name" value="UvrD-helicase"/>
    <property type="match status" value="1"/>
</dbReference>
<dbReference type="Pfam" id="PF13361">
    <property type="entry name" value="UvrD_C"/>
    <property type="match status" value="1"/>
</dbReference>
<dbReference type="SUPFAM" id="SSF52540">
    <property type="entry name" value="P-loop containing nucleoside triphosphate hydrolases"/>
    <property type="match status" value="1"/>
</dbReference>
<dbReference type="SUPFAM" id="SSF52980">
    <property type="entry name" value="Restriction endonuclease-like"/>
    <property type="match status" value="1"/>
</dbReference>
<dbReference type="PROSITE" id="PS51198">
    <property type="entry name" value="UVRD_HELICASE_ATP_BIND"/>
    <property type="match status" value="1"/>
</dbReference>
<dbReference type="PROSITE" id="PS51217">
    <property type="entry name" value="UVRD_HELICASE_CTER"/>
    <property type="match status" value="1"/>
</dbReference>
<name>ADDA_LISMF</name>
<organism>
    <name type="scientific">Listeria monocytogenes serotype 4b (strain F2365)</name>
    <dbReference type="NCBI Taxonomy" id="265669"/>
    <lineage>
        <taxon>Bacteria</taxon>
        <taxon>Bacillati</taxon>
        <taxon>Bacillota</taxon>
        <taxon>Bacilli</taxon>
        <taxon>Bacillales</taxon>
        <taxon>Listeriaceae</taxon>
        <taxon>Listeria</taxon>
    </lineage>
</organism>
<feature type="chain" id="PRO_0000379298" description="ATP-dependent helicase/nuclease subunit A">
    <location>
        <begin position="1"/>
        <end position="1235"/>
    </location>
</feature>
<feature type="domain" description="UvrD-like helicase ATP-binding" evidence="1">
    <location>
        <begin position="12"/>
        <end position="482"/>
    </location>
</feature>
<feature type="domain" description="UvrD-like helicase C-terminal" evidence="1">
    <location>
        <begin position="509"/>
        <end position="800"/>
    </location>
</feature>
<feature type="binding site" evidence="1">
    <location>
        <begin position="33"/>
        <end position="40"/>
    </location>
    <ligand>
        <name>ATP</name>
        <dbReference type="ChEBI" id="CHEBI:30616"/>
    </ligand>
</feature>
<protein>
    <recommendedName>
        <fullName evidence="1">ATP-dependent helicase/nuclease subunit A</fullName>
        <ecNumber evidence="1">3.1.-.-</ecNumber>
        <ecNumber evidence="1">5.6.2.4</ecNumber>
    </recommendedName>
    <alternativeName>
        <fullName evidence="1">ATP-dependent helicase/nuclease AddA</fullName>
    </alternativeName>
    <alternativeName>
        <fullName evidence="1">DNA 3'-5' helicase AddA</fullName>
    </alternativeName>
</protein>
<comment type="function">
    <text evidence="1">The heterodimer acts as both an ATP-dependent DNA helicase and an ATP-dependent, dual-direction single-stranded exonuclease. Recognizes the chi site generating a DNA molecule suitable for the initiation of homologous recombination. The AddA nuclease domain is required for chi fragment generation; this subunit has the helicase and 3' -&gt; 5' nuclease activities.</text>
</comment>
<comment type="catalytic activity">
    <reaction evidence="1">
        <text>Couples ATP hydrolysis with the unwinding of duplex DNA by translocating in the 3'-5' direction.</text>
        <dbReference type="EC" id="5.6.2.4"/>
    </reaction>
</comment>
<comment type="catalytic activity">
    <reaction evidence="1">
        <text>ATP + H2O = ADP + phosphate + H(+)</text>
        <dbReference type="Rhea" id="RHEA:13065"/>
        <dbReference type="ChEBI" id="CHEBI:15377"/>
        <dbReference type="ChEBI" id="CHEBI:15378"/>
        <dbReference type="ChEBI" id="CHEBI:30616"/>
        <dbReference type="ChEBI" id="CHEBI:43474"/>
        <dbReference type="ChEBI" id="CHEBI:456216"/>
        <dbReference type="EC" id="5.6.2.4"/>
    </reaction>
</comment>
<comment type="cofactor">
    <cofactor evidence="1">
        <name>Mg(2+)</name>
        <dbReference type="ChEBI" id="CHEBI:18420"/>
    </cofactor>
</comment>
<comment type="subunit">
    <text evidence="1">Heterodimer of AddA and AddB/RexB.</text>
</comment>
<comment type="similarity">
    <text evidence="1">Belongs to the helicase family. AddA subfamily.</text>
</comment>
<gene>
    <name evidence="1" type="primary">addA</name>
    <name type="ordered locus">LMOf2365_2300</name>
</gene>
<keyword id="KW-0067">ATP-binding</keyword>
<keyword id="KW-0227">DNA damage</keyword>
<keyword id="KW-0234">DNA repair</keyword>
<keyword id="KW-0238">DNA-binding</keyword>
<keyword id="KW-0269">Exonuclease</keyword>
<keyword id="KW-0347">Helicase</keyword>
<keyword id="KW-0378">Hydrolase</keyword>
<keyword id="KW-0413">Isomerase</keyword>
<keyword id="KW-0540">Nuclease</keyword>
<keyword id="KW-0547">Nucleotide-binding</keyword>
<evidence type="ECO:0000255" key="1">
    <source>
        <dbReference type="HAMAP-Rule" id="MF_01451"/>
    </source>
</evidence>
<proteinExistence type="inferred from homology"/>